<feature type="chain" id="PRO_0000101621" description="Ribosomal RNA small subunit methyltransferase A">
    <location>
        <begin position="1"/>
        <end position="290"/>
    </location>
</feature>
<feature type="binding site" evidence="1">
    <location>
        <position position="27"/>
    </location>
    <ligand>
        <name>S-adenosyl-L-methionine</name>
        <dbReference type="ChEBI" id="CHEBI:59789"/>
    </ligand>
</feature>
<feature type="binding site" evidence="1">
    <location>
        <position position="29"/>
    </location>
    <ligand>
        <name>S-adenosyl-L-methionine</name>
        <dbReference type="ChEBI" id="CHEBI:59789"/>
    </ligand>
</feature>
<feature type="binding site" evidence="1">
    <location>
        <position position="54"/>
    </location>
    <ligand>
        <name>S-adenosyl-L-methionine</name>
        <dbReference type="ChEBI" id="CHEBI:59789"/>
    </ligand>
</feature>
<feature type="binding site" evidence="1">
    <location>
        <position position="75"/>
    </location>
    <ligand>
        <name>S-adenosyl-L-methionine</name>
        <dbReference type="ChEBI" id="CHEBI:59789"/>
    </ligand>
</feature>
<feature type="binding site" evidence="1">
    <location>
        <position position="100"/>
    </location>
    <ligand>
        <name>S-adenosyl-L-methionine</name>
        <dbReference type="ChEBI" id="CHEBI:59789"/>
    </ligand>
</feature>
<feature type="binding site" evidence="1">
    <location>
        <position position="125"/>
    </location>
    <ligand>
        <name>S-adenosyl-L-methionine</name>
        <dbReference type="ChEBI" id="CHEBI:59789"/>
    </ligand>
</feature>
<accession>Q8P2N8</accession>
<sequence length="290" mass="32732">MRIADYSVTKAVLDRHGFTFKKSFGQNFLTDTNILQKIVDTAEIDQNVNVIEIGPGIGALTEFLAENAAEVMAFEIDDRLVPILADTLRDFDNVQVVNQDILKADLQTQIKQFKNPDLPIKVVANLPYYITTPILMHLIESKIPFQEFVVMMQREVADRISAEPNTKAYGSLSIAVQYYMTAKVAFIVPRTVFVPAPNVDSAILKMVRRDQPLIEVKDEDFFFRVSRLSFVHRRKTLWNNLTSHFGKSEDIKTKLEKGLALADIKPSIRGEALSIQDFGKLADALKEVGL</sequence>
<proteinExistence type="inferred from homology"/>
<evidence type="ECO:0000255" key="1">
    <source>
        <dbReference type="HAMAP-Rule" id="MF_00607"/>
    </source>
</evidence>
<protein>
    <recommendedName>
        <fullName evidence="1">Ribosomal RNA small subunit methyltransferase A</fullName>
        <ecNumber evidence="1">2.1.1.182</ecNumber>
    </recommendedName>
    <alternativeName>
        <fullName evidence="1">16S rRNA (adenine(1518)-N(6)/adenine(1519)-N(6))-dimethyltransferase</fullName>
    </alternativeName>
    <alternativeName>
        <fullName evidence="1">16S rRNA dimethyladenosine transferase</fullName>
    </alternativeName>
    <alternativeName>
        <fullName evidence="1">16S rRNA dimethylase</fullName>
    </alternativeName>
    <alternativeName>
        <fullName evidence="1">S-adenosylmethionine-6-N', N'-adenosyl(rRNA) dimethyltransferase</fullName>
    </alternativeName>
</protein>
<keyword id="KW-0963">Cytoplasm</keyword>
<keyword id="KW-0489">Methyltransferase</keyword>
<keyword id="KW-0694">RNA-binding</keyword>
<keyword id="KW-0698">rRNA processing</keyword>
<keyword id="KW-0949">S-adenosyl-L-methionine</keyword>
<keyword id="KW-0808">Transferase</keyword>
<organism>
    <name type="scientific">Streptococcus pyogenes serotype M18 (strain MGAS8232)</name>
    <dbReference type="NCBI Taxonomy" id="186103"/>
    <lineage>
        <taxon>Bacteria</taxon>
        <taxon>Bacillati</taxon>
        <taxon>Bacillota</taxon>
        <taxon>Bacilli</taxon>
        <taxon>Lactobacillales</taxon>
        <taxon>Streptococcaceae</taxon>
        <taxon>Streptococcus</taxon>
    </lineage>
</organism>
<reference key="1">
    <citation type="journal article" date="2002" name="Proc. Natl. Acad. Sci. U.S.A.">
        <title>Genome sequence and comparative microarray analysis of serotype M18 group A Streptococcus strains associated with acute rheumatic fever outbreaks.</title>
        <authorList>
            <person name="Smoot J.C."/>
            <person name="Barbian K.D."/>
            <person name="Van Gompel J.J."/>
            <person name="Smoot L.M."/>
            <person name="Chaussee M.S."/>
            <person name="Sylva G.L."/>
            <person name="Sturdevant D.E."/>
            <person name="Ricklefs S.M."/>
            <person name="Porcella S.F."/>
            <person name="Parkins L.D."/>
            <person name="Beres S.B."/>
            <person name="Campbell D.S."/>
            <person name="Smith T.M."/>
            <person name="Zhang Q."/>
            <person name="Kapur V."/>
            <person name="Daly J.A."/>
            <person name="Veasy L.G."/>
            <person name="Musser J.M."/>
        </authorList>
    </citation>
    <scope>NUCLEOTIDE SEQUENCE [LARGE SCALE GENOMIC DNA]</scope>
    <source>
        <strain>MGAS8232</strain>
    </source>
</reference>
<comment type="function">
    <text evidence="1">Specifically dimethylates two adjacent adenosines (A1518 and A1519) in the loop of a conserved hairpin near the 3'-end of 16S rRNA in the 30S particle. May play a critical role in biogenesis of 30S subunits.</text>
</comment>
<comment type="catalytic activity">
    <reaction evidence="1">
        <text>adenosine(1518)/adenosine(1519) in 16S rRNA + 4 S-adenosyl-L-methionine = N(6)-dimethyladenosine(1518)/N(6)-dimethyladenosine(1519) in 16S rRNA + 4 S-adenosyl-L-homocysteine + 4 H(+)</text>
        <dbReference type="Rhea" id="RHEA:19609"/>
        <dbReference type="Rhea" id="RHEA-COMP:10232"/>
        <dbReference type="Rhea" id="RHEA-COMP:10233"/>
        <dbReference type="ChEBI" id="CHEBI:15378"/>
        <dbReference type="ChEBI" id="CHEBI:57856"/>
        <dbReference type="ChEBI" id="CHEBI:59789"/>
        <dbReference type="ChEBI" id="CHEBI:74411"/>
        <dbReference type="ChEBI" id="CHEBI:74493"/>
        <dbReference type="EC" id="2.1.1.182"/>
    </reaction>
</comment>
<comment type="subcellular location">
    <subcellularLocation>
        <location evidence="1">Cytoplasm</location>
    </subcellularLocation>
</comment>
<comment type="similarity">
    <text evidence="1">Belongs to the class I-like SAM-binding methyltransferase superfamily. rRNA adenine N(6)-methyltransferase family. RsmA subfamily.</text>
</comment>
<name>RSMA_STRP8</name>
<gene>
    <name evidence="1" type="primary">rsmA</name>
    <name evidence="1" type="synonym">ksgA</name>
    <name type="ordered locus">spyM18_0246</name>
</gene>
<dbReference type="EC" id="2.1.1.182" evidence="1"/>
<dbReference type="EMBL" id="AE009949">
    <property type="protein sequence ID" value="AAL97029.1"/>
    <property type="molecule type" value="Genomic_DNA"/>
</dbReference>
<dbReference type="RefSeq" id="WP_002986066.1">
    <property type="nucleotide sequence ID" value="NC_003485.1"/>
</dbReference>
<dbReference type="SMR" id="Q8P2N8"/>
<dbReference type="KEGG" id="spm:spyM18_0246"/>
<dbReference type="HOGENOM" id="CLU_041220_0_0_9"/>
<dbReference type="GO" id="GO:0005829">
    <property type="term" value="C:cytosol"/>
    <property type="evidence" value="ECO:0007669"/>
    <property type="project" value="TreeGrafter"/>
</dbReference>
<dbReference type="GO" id="GO:0052908">
    <property type="term" value="F:16S rRNA (adenine(1518)-N(6)/adenine(1519)-N(6))-dimethyltransferase activity"/>
    <property type="evidence" value="ECO:0007669"/>
    <property type="project" value="UniProtKB-EC"/>
</dbReference>
<dbReference type="GO" id="GO:0003723">
    <property type="term" value="F:RNA binding"/>
    <property type="evidence" value="ECO:0007669"/>
    <property type="project" value="UniProtKB-KW"/>
</dbReference>
<dbReference type="CDD" id="cd02440">
    <property type="entry name" value="AdoMet_MTases"/>
    <property type="match status" value="1"/>
</dbReference>
<dbReference type="FunFam" id="3.40.50.150:FF:000023">
    <property type="entry name" value="Ribosomal RNA small subunit methyltransferase A"/>
    <property type="match status" value="1"/>
</dbReference>
<dbReference type="Gene3D" id="1.10.8.100">
    <property type="entry name" value="Ribosomal RNA adenine dimethylase-like, domain 2"/>
    <property type="match status" value="1"/>
</dbReference>
<dbReference type="Gene3D" id="3.40.50.150">
    <property type="entry name" value="Vaccinia Virus protein VP39"/>
    <property type="match status" value="1"/>
</dbReference>
<dbReference type="HAMAP" id="MF_00607">
    <property type="entry name" value="16SrRNA_methyltr_A"/>
    <property type="match status" value="1"/>
</dbReference>
<dbReference type="InterPro" id="IPR001737">
    <property type="entry name" value="KsgA/Erm"/>
</dbReference>
<dbReference type="InterPro" id="IPR023165">
    <property type="entry name" value="rRNA_Ade_diMease-like_C"/>
</dbReference>
<dbReference type="InterPro" id="IPR020596">
    <property type="entry name" value="rRNA_Ade_Mease_Trfase_CS"/>
</dbReference>
<dbReference type="InterPro" id="IPR020598">
    <property type="entry name" value="rRNA_Ade_methylase_Trfase_N"/>
</dbReference>
<dbReference type="InterPro" id="IPR011530">
    <property type="entry name" value="rRNA_adenine_dimethylase"/>
</dbReference>
<dbReference type="InterPro" id="IPR029063">
    <property type="entry name" value="SAM-dependent_MTases_sf"/>
</dbReference>
<dbReference type="NCBIfam" id="TIGR00755">
    <property type="entry name" value="ksgA"/>
    <property type="match status" value="1"/>
</dbReference>
<dbReference type="PANTHER" id="PTHR11727">
    <property type="entry name" value="DIMETHYLADENOSINE TRANSFERASE"/>
    <property type="match status" value="1"/>
</dbReference>
<dbReference type="PANTHER" id="PTHR11727:SF7">
    <property type="entry name" value="DIMETHYLADENOSINE TRANSFERASE-RELATED"/>
    <property type="match status" value="1"/>
</dbReference>
<dbReference type="Pfam" id="PF00398">
    <property type="entry name" value="RrnaAD"/>
    <property type="match status" value="1"/>
</dbReference>
<dbReference type="SMART" id="SM00650">
    <property type="entry name" value="rADc"/>
    <property type="match status" value="1"/>
</dbReference>
<dbReference type="SUPFAM" id="SSF53335">
    <property type="entry name" value="S-adenosyl-L-methionine-dependent methyltransferases"/>
    <property type="match status" value="1"/>
</dbReference>
<dbReference type="PROSITE" id="PS01131">
    <property type="entry name" value="RRNA_A_DIMETH"/>
    <property type="match status" value="1"/>
</dbReference>
<dbReference type="PROSITE" id="PS51689">
    <property type="entry name" value="SAM_RNA_A_N6_MT"/>
    <property type="match status" value="1"/>
</dbReference>